<comment type="function">
    <text evidence="1">Forms part of the ribosomal stalk, playing a central role in the interaction of the ribosome with GTP-bound translation factors.</text>
</comment>
<comment type="subunit">
    <text evidence="1">Part of the ribosomal stalk of the 50S ribosomal subunit. The N-terminus interacts with L11 and the large rRNA to form the base of the stalk. The C-terminus forms an elongated spine to which L12 dimers bind in a sequential fashion forming a multimeric L10(L12)X complex.</text>
</comment>
<comment type="similarity">
    <text evidence="1">Belongs to the universal ribosomal protein uL10 family.</text>
</comment>
<evidence type="ECO:0000255" key="1">
    <source>
        <dbReference type="HAMAP-Rule" id="MF_00362"/>
    </source>
</evidence>
<evidence type="ECO:0000256" key="2">
    <source>
        <dbReference type="SAM" id="MobiDB-lite"/>
    </source>
</evidence>
<evidence type="ECO:0000305" key="3"/>
<organism>
    <name type="scientific">Treponema denticola (strain ATCC 35405 / DSM 14222 / CIP 103919 / JCM 8153 / KCTC 15104)</name>
    <dbReference type="NCBI Taxonomy" id="243275"/>
    <lineage>
        <taxon>Bacteria</taxon>
        <taxon>Pseudomonadati</taxon>
        <taxon>Spirochaetota</taxon>
        <taxon>Spirochaetia</taxon>
        <taxon>Spirochaetales</taxon>
        <taxon>Treponemataceae</taxon>
        <taxon>Treponema</taxon>
    </lineage>
</organism>
<accession>Q73JJ5</accession>
<keyword id="KW-1185">Reference proteome</keyword>
<keyword id="KW-0687">Ribonucleoprotein</keyword>
<keyword id="KW-0689">Ribosomal protein</keyword>
<keyword id="KW-0694">RNA-binding</keyword>
<keyword id="KW-0699">rRNA-binding</keyword>
<name>RL10_TREDE</name>
<sequence>MALRTKNPNRQKTEAIESIKNDVKASSAFIFTEYRGLKVEQITELRKKLRENACTYKVVRNNFARIAFEDADIKDVDSWLTGPTALAMIAEDANLAAKTLFEYAKDAPALVIKGAVVDGEIYDAKQIEAFSKLPGKKDLIAMFMSTVNATTSKFVRTLQAIVDKGGAQGAAPAEAKAEAPASEEKAADTPAEQPAESAPEAAPEA</sequence>
<protein>
    <recommendedName>
        <fullName evidence="1">Large ribosomal subunit protein uL10</fullName>
    </recommendedName>
    <alternativeName>
        <fullName evidence="3">50S ribosomal protein L10</fullName>
    </alternativeName>
</protein>
<gene>
    <name evidence="1" type="primary">rplJ</name>
    <name type="ordered locus">TDE_2423</name>
</gene>
<reference key="1">
    <citation type="journal article" date="2004" name="Proc. Natl. Acad. Sci. U.S.A.">
        <title>Comparison of the genome of the oral pathogen Treponema denticola with other spirochete genomes.</title>
        <authorList>
            <person name="Seshadri R."/>
            <person name="Myers G.S.A."/>
            <person name="Tettelin H."/>
            <person name="Eisen J.A."/>
            <person name="Heidelberg J.F."/>
            <person name="Dodson R.J."/>
            <person name="Davidsen T.M."/>
            <person name="DeBoy R.T."/>
            <person name="Fouts D.E."/>
            <person name="Haft D.H."/>
            <person name="Selengut J."/>
            <person name="Ren Q."/>
            <person name="Brinkac L.M."/>
            <person name="Madupu R."/>
            <person name="Kolonay J.F."/>
            <person name="Durkin S.A."/>
            <person name="Daugherty S.C."/>
            <person name="Shetty J."/>
            <person name="Shvartsbeyn A."/>
            <person name="Gebregeorgis E."/>
            <person name="Geer K."/>
            <person name="Tsegaye G."/>
            <person name="Malek J.A."/>
            <person name="Ayodeji B."/>
            <person name="Shatsman S."/>
            <person name="McLeod M.P."/>
            <person name="Smajs D."/>
            <person name="Howell J.K."/>
            <person name="Pal S."/>
            <person name="Amin A."/>
            <person name="Vashisth P."/>
            <person name="McNeill T.Z."/>
            <person name="Xiang Q."/>
            <person name="Sodergren E."/>
            <person name="Baca E."/>
            <person name="Weinstock G.M."/>
            <person name="Norris S.J."/>
            <person name="Fraser C.M."/>
            <person name="Paulsen I.T."/>
        </authorList>
    </citation>
    <scope>NUCLEOTIDE SEQUENCE [LARGE SCALE GENOMIC DNA]</scope>
    <source>
        <strain>ATCC 35405 / DSM 14222 / CIP 103919 / JCM 8153 / KCTC 15104</strain>
    </source>
</reference>
<proteinExistence type="inferred from homology"/>
<feature type="chain" id="PRO_0000154738" description="Large ribosomal subunit protein uL10">
    <location>
        <begin position="1"/>
        <end position="205"/>
    </location>
</feature>
<feature type="region of interest" description="Disordered" evidence="2">
    <location>
        <begin position="167"/>
        <end position="205"/>
    </location>
</feature>
<feature type="compositionally biased region" description="Low complexity" evidence="2">
    <location>
        <begin position="169"/>
        <end position="180"/>
    </location>
</feature>
<feature type="compositionally biased region" description="Low complexity" evidence="2">
    <location>
        <begin position="190"/>
        <end position="205"/>
    </location>
</feature>
<dbReference type="EMBL" id="AE017226">
    <property type="protein sequence ID" value="AAS12941.1"/>
    <property type="molecule type" value="Genomic_DNA"/>
</dbReference>
<dbReference type="RefSeq" id="NP_973022.1">
    <property type="nucleotide sequence ID" value="NC_002967.9"/>
</dbReference>
<dbReference type="RefSeq" id="WP_002680363.1">
    <property type="nucleotide sequence ID" value="NC_002967.9"/>
</dbReference>
<dbReference type="SMR" id="Q73JJ5"/>
<dbReference type="STRING" id="243275.TDE_2423"/>
<dbReference type="PaxDb" id="243275-TDE_2423"/>
<dbReference type="GeneID" id="2739848"/>
<dbReference type="KEGG" id="tde:TDE_2423"/>
<dbReference type="PATRIC" id="fig|243275.7.peg.2290"/>
<dbReference type="eggNOG" id="COG0244">
    <property type="taxonomic scope" value="Bacteria"/>
</dbReference>
<dbReference type="HOGENOM" id="CLU_092227_1_2_12"/>
<dbReference type="OrthoDB" id="9808307at2"/>
<dbReference type="Proteomes" id="UP000008212">
    <property type="component" value="Chromosome"/>
</dbReference>
<dbReference type="GO" id="GO:1990904">
    <property type="term" value="C:ribonucleoprotein complex"/>
    <property type="evidence" value="ECO:0007669"/>
    <property type="project" value="UniProtKB-KW"/>
</dbReference>
<dbReference type="GO" id="GO:0005840">
    <property type="term" value="C:ribosome"/>
    <property type="evidence" value="ECO:0007669"/>
    <property type="project" value="UniProtKB-KW"/>
</dbReference>
<dbReference type="GO" id="GO:0070180">
    <property type="term" value="F:large ribosomal subunit rRNA binding"/>
    <property type="evidence" value="ECO:0007669"/>
    <property type="project" value="UniProtKB-UniRule"/>
</dbReference>
<dbReference type="GO" id="GO:0006412">
    <property type="term" value="P:translation"/>
    <property type="evidence" value="ECO:0007669"/>
    <property type="project" value="UniProtKB-UniRule"/>
</dbReference>
<dbReference type="CDD" id="cd05797">
    <property type="entry name" value="Ribosomal_L10"/>
    <property type="match status" value="1"/>
</dbReference>
<dbReference type="Gene3D" id="3.30.70.1730">
    <property type="match status" value="1"/>
</dbReference>
<dbReference type="Gene3D" id="6.10.250.2350">
    <property type="match status" value="1"/>
</dbReference>
<dbReference type="HAMAP" id="MF_00362">
    <property type="entry name" value="Ribosomal_uL10"/>
    <property type="match status" value="1"/>
</dbReference>
<dbReference type="InterPro" id="IPR001790">
    <property type="entry name" value="Ribosomal_uL10"/>
</dbReference>
<dbReference type="InterPro" id="IPR043141">
    <property type="entry name" value="Ribosomal_uL10-like_sf"/>
</dbReference>
<dbReference type="InterPro" id="IPR022973">
    <property type="entry name" value="Ribosomal_uL10_bac"/>
</dbReference>
<dbReference type="InterPro" id="IPR047865">
    <property type="entry name" value="Ribosomal_uL10_bac_type"/>
</dbReference>
<dbReference type="NCBIfam" id="NF000955">
    <property type="entry name" value="PRK00099.1-1"/>
    <property type="match status" value="1"/>
</dbReference>
<dbReference type="PANTHER" id="PTHR11560">
    <property type="entry name" value="39S RIBOSOMAL PROTEIN L10, MITOCHONDRIAL"/>
    <property type="match status" value="1"/>
</dbReference>
<dbReference type="Pfam" id="PF00466">
    <property type="entry name" value="Ribosomal_L10"/>
    <property type="match status" value="1"/>
</dbReference>
<dbReference type="SUPFAM" id="SSF160369">
    <property type="entry name" value="Ribosomal protein L10-like"/>
    <property type="match status" value="1"/>
</dbReference>